<feature type="chain" id="PRO_0000064207" description="Peptidyl-prolyl cis-trans isomerase B">
    <location>
        <begin position="1"/>
        <end position="175"/>
    </location>
</feature>
<feature type="domain" description="PPIase cyclophilin-type" evidence="1">
    <location>
        <begin position="3"/>
        <end position="172"/>
    </location>
</feature>
<sequence>MAEQLYATLKTNRGDIEIRLLPNHAPKTVRNFVELATGQREWVNPETGEKSTDRLYDGTVFHRVISGFMIQGGDPLGNGTGGPGYKFADEFHPELGFTQPYLLAMANAGPGTNGSQFFLTVSPTAWLTGKHTIFGEVSGEAGRKVVDAIAATPTNPRTDRPLEDVVIESVVVETR</sequence>
<gene>
    <name type="primary">cypB</name>
</gene>
<dbReference type="EC" id="5.2.1.8"/>
<dbReference type="EMBL" id="U64692">
    <property type="protein sequence ID" value="AAB51775.1"/>
    <property type="molecule type" value="Genomic_DNA"/>
</dbReference>
<dbReference type="PIR" id="T51359">
    <property type="entry name" value="T51359"/>
</dbReference>
<dbReference type="RefSeq" id="WP_050359820.1">
    <property type="nucleotide sequence ID" value="NZ_JBICWO010000010.1"/>
</dbReference>
<dbReference type="SMR" id="P77949"/>
<dbReference type="GO" id="GO:0005737">
    <property type="term" value="C:cytoplasm"/>
    <property type="evidence" value="ECO:0007669"/>
    <property type="project" value="UniProtKB-SubCell"/>
</dbReference>
<dbReference type="GO" id="GO:0003755">
    <property type="term" value="F:peptidyl-prolyl cis-trans isomerase activity"/>
    <property type="evidence" value="ECO:0007669"/>
    <property type="project" value="UniProtKB-KW"/>
</dbReference>
<dbReference type="GO" id="GO:0006457">
    <property type="term" value="P:protein folding"/>
    <property type="evidence" value="ECO:0007669"/>
    <property type="project" value="InterPro"/>
</dbReference>
<dbReference type="CDD" id="cd00317">
    <property type="entry name" value="cyclophilin"/>
    <property type="match status" value="1"/>
</dbReference>
<dbReference type="FunFam" id="2.40.100.10:FF:000028">
    <property type="entry name" value="Peptidyl-prolyl cis-trans isomerase"/>
    <property type="match status" value="1"/>
</dbReference>
<dbReference type="Gene3D" id="2.40.100.10">
    <property type="entry name" value="Cyclophilin-like"/>
    <property type="match status" value="1"/>
</dbReference>
<dbReference type="InterPro" id="IPR029000">
    <property type="entry name" value="Cyclophilin-like_dom_sf"/>
</dbReference>
<dbReference type="InterPro" id="IPR024936">
    <property type="entry name" value="Cyclophilin-type_PPIase"/>
</dbReference>
<dbReference type="InterPro" id="IPR020892">
    <property type="entry name" value="Cyclophilin-type_PPIase_CS"/>
</dbReference>
<dbReference type="InterPro" id="IPR002130">
    <property type="entry name" value="Cyclophilin-type_PPIase_dom"/>
</dbReference>
<dbReference type="InterPro" id="IPR044666">
    <property type="entry name" value="Cyclophilin_A-like"/>
</dbReference>
<dbReference type="PANTHER" id="PTHR45625">
    <property type="entry name" value="PEPTIDYL-PROLYL CIS-TRANS ISOMERASE-RELATED"/>
    <property type="match status" value="1"/>
</dbReference>
<dbReference type="PANTHER" id="PTHR45625:SF4">
    <property type="entry name" value="PEPTIDYLPROLYL ISOMERASE DOMAIN AND WD REPEAT-CONTAINING PROTEIN 1"/>
    <property type="match status" value="1"/>
</dbReference>
<dbReference type="Pfam" id="PF00160">
    <property type="entry name" value="Pro_isomerase"/>
    <property type="match status" value="1"/>
</dbReference>
<dbReference type="PIRSF" id="PIRSF001467">
    <property type="entry name" value="Peptidylpro_ismrse"/>
    <property type="match status" value="1"/>
</dbReference>
<dbReference type="PRINTS" id="PR00153">
    <property type="entry name" value="CSAPPISMRASE"/>
</dbReference>
<dbReference type="SUPFAM" id="SSF50891">
    <property type="entry name" value="Cyclophilin-like"/>
    <property type="match status" value="1"/>
</dbReference>
<dbReference type="PROSITE" id="PS00170">
    <property type="entry name" value="CSA_PPIASE_1"/>
    <property type="match status" value="1"/>
</dbReference>
<dbReference type="PROSITE" id="PS50072">
    <property type="entry name" value="CSA_PPIASE_2"/>
    <property type="match status" value="1"/>
</dbReference>
<proteinExistence type="evidence at protein level"/>
<protein>
    <recommendedName>
        <fullName>Peptidyl-prolyl cis-trans isomerase B</fullName>
        <shortName>PPIase B</shortName>
        <ecNumber>5.2.1.8</ecNumber>
    </recommendedName>
    <alternativeName>
        <fullName>Cyclophilin ScCypB</fullName>
    </alternativeName>
    <alternativeName>
        <fullName>Rotamase B</fullName>
    </alternativeName>
    <alternativeName>
        <fullName>S-cyclophilin</fullName>
    </alternativeName>
</protein>
<organism>
    <name type="scientific">Streptomyces anulatus</name>
    <name type="common">Streptomyces chrysomallus</name>
    <dbReference type="NCBI Taxonomy" id="1892"/>
    <lineage>
        <taxon>Bacteria</taxon>
        <taxon>Bacillati</taxon>
        <taxon>Actinomycetota</taxon>
        <taxon>Actinomycetes</taxon>
        <taxon>Kitasatosporales</taxon>
        <taxon>Streptomycetaceae</taxon>
        <taxon>Streptomyces</taxon>
    </lineage>
</organism>
<reference key="1">
    <citation type="journal article" date="1997" name="Microbiology">
        <title>ScCypB is a novel second cytosolic cyclophilin from Streptomyces chrysomallus which is phylogenetically distant from ScCypA.</title>
        <authorList>
            <person name="Pahl A."/>
            <person name="Gewies A."/>
            <person name="Keller U."/>
        </authorList>
    </citation>
    <scope>NUCLEOTIDE SEQUENCE [GENOMIC DNA]</scope>
    <scope>CHARACTERIZATION</scope>
</reference>
<comment type="function">
    <text>PPIases accelerate the folding of proteins. It catalyzes the cis-trans isomerization of proline imidic peptide bonds in oligopeptides.</text>
</comment>
<comment type="catalytic activity">
    <reaction>
        <text>[protein]-peptidylproline (omega=180) = [protein]-peptidylproline (omega=0)</text>
        <dbReference type="Rhea" id="RHEA:16237"/>
        <dbReference type="Rhea" id="RHEA-COMP:10747"/>
        <dbReference type="Rhea" id="RHEA-COMP:10748"/>
        <dbReference type="ChEBI" id="CHEBI:83833"/>
        <dbReference type="ChEBI" id="CHEBI:83834"/>
        <dbReference type="EC" id="5.2.1.8"/>
    </reaction>
</comment>
<comment type="activity regulation">
    <text>Inhibited by cyclosporin A (CsA).</text>
</comment>
<comment type="subcellular location">
    <subcellularLocation>
        <location>Cytoplasm</location>
    </subcellularLocation>
</comment>
<comment type="similarity">
    <text evidence="2">Belongs to the cyclophilin-type PPIase family.</text>
</comment>
<name>PPIB_STRAQ</name>
<keyword id="KW-0963">Cytoplasm</keyword>
<keyword id="KW-0413">Isomerase</keyword>
<keyword id="KW-0697">Rotamase</keyword>
<accession>P77949</accession>
<evidence type="ECO:0000255" key="1">
    <source>
        <dbReference type="PROSITE-ProRule" id="PRU00156"/>
    </source>
</evidence>
<evidence type="ECO:0000305" key="2"/>